<dbReference type="EC" id="1.1.1.272" evidence="4 5"/>
<dbReference type="EC" id="1.1.1.345" evidence="4 5"/>
<dbReference type="EC" id="1.1.1.28" evidence="4 5"/>
<dbReference type="EMBL" id="M64304">
    <property type="protein sequence ID" value="AAA24789.1"/>
    <property type="molecule type" value="Genomic_DNA"/>
</dbReference>
<dbReference type="EMBL" id="M97297">
    <property type="protein sequence ID" value="AAA65955.1"/>
    <property type="molecule type" value="Genomic_DNA"/>
</dbReference>
<dbReference type="PIR" id="JQ1191">
    <property type="entry name" value="JQ1191"/>
</dbReference>
<dbReference type="RefSeq" id="WP_001059542.1">
    <property type="nucleotide sequence ID" value="NZ_WSZC01000116.1"/>
</dbReference>
<dbReference type="RefSeq" id="YP_001019036.1">
    <property type="nucleotide sequence ID" value="NC_008821.1"/>
</dbReference>
<dbReference type="RefSeq" id="YP_001974797.1">
    <property type="nucleotide sequence ID" value="NC_010980.1"/>
</dbReference>
<dbReference type="RefSeq" id="YP_002128398.1">
    <property type="nucleotide sequence ID" value="NC_011140.1"/>
</dbReference>
<dbReference type="RefSeq" id="YP_004172616.1">
    <property type="nucleotide sequence ID" value="NC_014959.1"/>
</dbReference>
<dbReference type="RefSeq" id="YP_006937549.1">
    <property type="nucleotide sequence ID" value="NC_013317.1"/>
</dbReference>
<dbReference type="RefSeq" id="YP_007908269.1">
    <property type="nucleotide sequence ID" value="NC_021170.1"/>
</dbReference>
<dbReference type="RefSeq" id="YP_976078.1">
    <property type="nucleotide sequence ID" value="NC_008768.1"/>
</dbReference>
<dbReference type="SMR" id="Q05709"/>
<dbReference type="CARD" id="ARO:3002942">
    <property type="molecule name" value="vanH_in_vanA_cl"/>
    <property type="mechanism identifier" value="ARO:0001001"/>
    <property type="mechanism name" value="antibiotic target alteration"/>
</dbReference>
<dbReference type="SABIO-RK" id="Q05709"/>
<dbReference type="GO" id="GO:0050578">
    <property type="term" value="F:(R)-2-hydroxyacid dehydrogenase activity"/>
    <property type="evidence" value="ECO:0007669"/>
    <property type="project" value="RHEA"/>
</dbReference>
<dbReference type="GO" id="GO:0008720">
    <property type="term" value="F:D-lactate dehydrogenase activity"/>
    <property type="evidence" value="ECO:0007669"/>
    <property type="project" value="RHEA"/>
</dbReference>
<dbReference type="GO" id="GO:0051287">
    <property type="term" value="F:NAD binding"/>
    <property type="evidence" value="ECO:0007669"/>
    <property type="project" value="InterPro"/>
</dbReference>
<dbReference type="GO" id="GO:0071555">
    <property type="term" value="P:cell wall organization"/>
    <property type="evidence" value="ECO:0007669"/>
    <property type="project" value="UniProtKB-KW"/>
</dbReference>
<dbReference type="GO" id="GO:0046677">
    <property type="term" value="P:response to antibiotic"/>
    <property type="evidence" value="ECO:0007669"/>
    <property type="project" value="UniProtKB-KW"/>
</dbReference>
<dbReference type="CDD" id="cd12185">
    <property type="entry name" value="HGDH_LDH_like"/>
    <property type="match status" value="1"/>
</dbReference>
<dbReference type="Gene3D" id="3.40.50.720">
    <property type="entry name" value="NAD(P)-binding Rossmann-like Domain"/>
    <property type="match status" value="2"/>
</dbReference>
<dbReference type="InterPro" id="IPR006139">
    <property type="entry name" value="D-isomer_2_OHA_DH_cat_dom"/>
</dbReference>
<dbReference type="InterPro" id="IPR029753">
    <property type="entry name" value="D-isomer_DH_CS"/>
</dbReference>
<dbReference type="InterPro" id="IPR029752">
    <property type="entry name" value="D-isomer_DH_CS1"/>
</dbReference>
<dbReference type="InterPro" id="IPR006140">
    <property type="entry name" value="D-isomer_DH_NAD-bd"/>
</dbReference>
<dbReference type="InterPro" id="IPR036291">
    <property type="entry name" value="NAD(P)-bd_dom_sf"/>
</dbReference>
<dbReference type="NCBIfam" id="NF000371">
    <property type="entry name" value="vanH_Agroup"/>
    <property type="match status" value="1"/>
</dbReference>
<dbReference type="NCBIfam" id="NF000492">
    <property type="entry name" value="vanH_gen"/>
    <property type="match status" value="1"/>
</dbReference>
<dbReference type="PANTHER" id="PTHR43026">
    <property type="entry name" value="2-HYDROXYACID DEHYDROGENASE HOMOLOG 1-RELATED"/>
    <property type="match status" value="1"/>
</dbReference>
<dbReference type="PANTHER" id="PTHR43026:SF1">
    <property type="entry name" value="2-HYDROXYACID DEHYDROGENASE HOMOLOG 1-RELATED"/>
    <property type="match status" value="1"/>
</dbReference>
<dbReference type="Pfam" id="PF00389">
    <property type="entry name" value="2-Hacid_dh"/>
    <property type="match status" value="1"/>
</dbReference>
<dbReference type="Pfam" id="PF02826">
    <property type="entry name" value="2-Hacid_dh_C"/>
    <property type="match status" value="1"/>
</dbReference>
<dbReference type="SUPFAM" id="SSF52283">
    <property type="entry name" value="Formate/glycerate dehydrogenase catalytic domain-like"/>
    <property type="match status" value="1"/>
</dbReference>
<dbReference type="SUPFAM" id="SSF51735">
    <property type="entry name" value="NAD(P)-binding Rossmann-fold domains"/>
    <property type="match status" value="1"/>
</dbReference>
<dbReference type="PROSITE" id="PS00065">
    <property type="entry name" value="D_2_HYDROXYACID_DH_1"/>
    <property type="match status" value="1"/>
</dbReference>
<dbReference type="PROSITE" id="PS00670">
    <property type="entry name" value="D_2_HYDROXYACID_DH_2"/>
    <property type="match status" value="1"/>
</dbReference>
<dbReference type="PROSITE" id="PS00671">
    <property type="entry name" value="D_2_HYDROXYACID_DH_3"/>
    <property type="match status" value="1"/>
</dbReference>
<name>VANH_ENTFC</name>
<evidence type="ECO:0000250" key="1"/>
<evidence type="ECO:0000269" key="2">
    <source>
    </source>
</evidence>
<evidence type="ECO:0000269" key="3">
    <source>
    </source>
</evidence>
<evidence type="ECO:0000269" key="4">
    <source>
    </source>
</evidence>
<evidence type="ECO:0000269" key="5">
    <source>
    </source>
</evidence>
<evidence type="ECO:0000303" key="6">
    <source>
    </source>
</evidence>
<evidence type="ECO:0000305" key="7"/>
<evidence type="ECO:0000305" key="8">
    <source>
    </source>
</evidence>
<reference key="1">
    <citation type="journal article" date="1991" name="Gene">
        <title>Structural relationship between the vancomycin resistance protein VanH and 2-hydroxycarboxylic acid dehydrogenases.</title>
        <authorList>
            <person name="Arthur M."/>
            <person name="Molinas C."/>
            <person name="Dutka-Malen S."/>
            <person name="Courvalin P."/>
        </authorList>
    </citation>
    <scope>NUCLEOTIDE SEQUENCE [GENOMIC DNA]</scope>
    <source>
        <strain>BM4147</strain>
    </source>
</reference>
<reference key="2">
    <citation type="journal article" date="1993" name="J. Bacteriol.">
        <title>Characterization of Tn1546, a Tn3-related transposon conferring glycopeptide resistance by synthesis of depsipeptide peptidoglycan precursors in Enterococcus faecium BM4147.</title>
        <authorList>
            <person name="Arthur M."/>
            <person name="Molinas C."/>
            <person name="Depardieu F."/>
            <person name="Courvalin P."/>
        </authorList>
    </citation>
    <scope>NUCLEOTIDE SEQUENCE [GENOMIC DNA]</scope>
    <source>
        <strain>BM4147</strain>
        <transposon>Tn1546</transposon>
    </source>
</reference>
<reference key="3">
    <citation type="journal article" date="1991" name="Biochemistry">
        <title>Molecular basis for vancomycin resistance in Enterococcus faecium BM4147: biosynthesis of a depsipeptide peptidoglycan precursor by vancomycin resistance proteins VanH and VanA.</title>
        <authorList>
            <person name="Bugg T.D.H."/>
            <person name="Wright G.D."/>
            <person name="Dutka-Malen S."/>
            <person name="Arthur M."/>
            <person name="Courvalin P."/>
            <person name="Walsh C.T."/>
        </authorList>
    </citation>
    <scope>PROTEIN SEQUENCE OF 1-32</scope>
    <scope>CHARACTERIZATION</scope>
    <scope>FUNCTION</scope>
    <scope>CATALYTIC ACTIVITY</scope>
    <scope>BIOPHYSICOCHEMICAL PROPERTIES</scope>
    <source>
        <strain>BM4147</strain>
    </source>
</reference>
<reference evidence="7" key="4">
    <citation type="journal article" date="1992" name="Antimicrob. Agents Chemother.">
        <title>Evidence for in vivo incorporation of D-lactate into peptidoglycan precursors of vancomycin-resistant enterococci.</title>
        <authorList>
            <person name="Arthur M."/>
            <person name="Molinas C."/>
            <person name="Bugg T.D."/>
            <person name="Wright G.D."/>
            <person name="Walsh C.T."/>
            <person name="Courvalin P."/>
        </authorList>
    </citation>
    <scope>FUNCTION</scope>
</reference>
<reference key="5">
    <citation type="journal article" date="1992" name="J. Bacteriol.">
        <title>The cytoplasmic peptidoglycan precursor of vancomycin-resistant Enterococcus faecalis terminates in lactate.</title>
        <authorList>
            <person name="Handwerger S."/>
            <person name="Pucci M.J."/>
            <person name="Volk K.J."/>
            <person name="Liu J."/>
            <person name="Lee M.S."/>
        </authorList>
    </citation>
    <scope>FUNCTION</scope>
</reference>
<reference key="6">
    <citation type="journal article" date="1992" name="J. Bacteriol.">
        <title>The VanS-VanR two-component regulatory system controls synthesis of depsipeptide peptidoglycan precursors in Enterococcus faecium BM4147.</title>
        <authorList>
            <person name="Arthur M."/>
            <person name="Molinas C."/>
            <person name="Courvalin P."/>
        </authorList>
    </citation>
    <scope>NUCLEOTIDE SEQUENCE [GENOMIC DNA] OF 1-19</scope>
</reference>
<reference key="7">
    <citation type="journal article" date="1998" name="Protein Sci.">
        <title>A thioredoxin fusion protein of VanH, a D-lactate dehydrogenase from Enterococcus faecium: cloning, expression, purification, kinetic analysis, and crystallization.</title>
        <authorList>
            <person name="Stoll V.S."/>
            <person name="Manohar A.V."/>
            <person name="Gillon W."/>
            <person name="MacFarlane E.L."/>
            <person name="Hynes R.C."/>
            <person name="Pai E.F."/>
        </authorList>
    </citation>
    <scope>FUNCTION</scope>
    <scope>CATALYTIC ACTIVITY</scope>
    <scope>BIOPHYSICOCHEMICAL PROPERTIES</scope>
</reference>
<keyword id="KW-0046">Antibiotic resistance</keyword>
<keyword id="KW-0961">Cell wall biogenesis/degradation</keyword>
<keyword id="KW-0903">Direct protein sequencing</keyword>
<keyword id="KW-0520">NAD</keyword>
<keyword id="KW-0560">Oxidoreductase</keyword>
<keyword id="KW-0614">Plasmid</keyword>
<proteinExistence type="evidence at protein level"/>
<organism>
    <name type="scientific">Enterococcus faecium</name>
    <name type="common">Streptococcus faecium</name>
    <dbReference type="NCBI Taxonomy" id="1352"/>
    <lineage>
        <taxon>Bacteria</taxon>
        <taxon>Bacillati</taxon>
        <taxon>Bacillota</taxon>
        <taxon>Bacilli</taxon>
        <taxon>Lactobacillales</taxon>
        <taxon>Enterococcaceae</taxon>
        <taxon>Enterococcus</taxon>
    </lineage>
</organism>
<protein>
    <recommendedName>
        <fullName>D-specific alpha-keto acid dehydrogenase</fullName>
        <ecNumber evidence="4 5">1.1.1.272</ecNumber>
        <ecNumber evidence="4 5">1.1.1.345</ecNumber>
    </recommendedName>
    <alternativeName>
        <fullName>D-2-hydroxyacid dehydrogenase</fullName>
    </alternativeName>
    <alternativeName>
        <fullName evidence="8">D-lactate dehydrogenase</fullName>
        <ecNumber evidence="4 5">1.1.1.28</ecNumber>
    </alternativeName>
    <alternativeName>
        <fullName evidence="8">Vancomycin resistance protein VanH</fullName>
    </alternativeName>
</protein>
<comment type="function">
    <text evidence="2 3 4 5">Required for high-level resistance to glycopeptide antibiotics (PubMed:1503450, PubMed:1522072). Catalyzes the reduction of 2-keto acids to 2-D-hydroxy acids, exhibiting highest catalytic efficiency with pyruvate and 2-oxobutanoate/alpha-ketobutyrate as substrates, producing D-lactate and (2R)-hydroxybutanoate, respectively (PubMed:1503450, PubMed:1931965, PubMed:9605319). Together with D-alanine--D-lactate ligase VanA, gives rise to peptidoglycan precursors that terminate in the depsipeptide D-alanine-D-lactate rather than the dipeptide D-alanine-D-alanine thus preventing vancomycin binding (PubMed:1522072, PubMed:1931965, PubMed:9605319). Shows a slight preference for NADPH over NADH as the electron donor (PubMed:1931965, PubMed:9605319).</text>
</comment>
<comment type="catalytic activity">
    <reaction evidence="4 5">
        <text>a (2R)-2-hydroxycarboxylate + NADP(+) = a 2-oxocarboxylate + NADPH + H(+)</text>
        <dbReference type="Rhea" id="RHEA:35735"/>
        <dbReference type="ChEBI" id="CHEBI:15378"/>
        <dbReference type="ChEBI" id="CHEBI:35179"/>
        <dbReference type="ChEBI" id="CHEBI:57783"/>
        <dbReference type="ChEBI" id="CHEBI:58314"/>
        <dbReference type="ChEBI" id="CHEBI:58349"/>
        <dbReference type="EC" id="1.1.1.272"/>
    </reaction>
    <physiologicalReaction direction="right-to-left" evidence="4">
        <dbReference type="Rhea" id="RHEA:35737"/>
    </physiologicalReaction>
</comment>
<comment type="catalytic activity">
    <reaction evidence="4 5">
        <text>a (2R)-2-hydroxycarboxylate + NAD(+) = a 2-oxocarboxylate + NADH + H(+)</text>
        <dbReference type="Rhea" id="RHEA:35643"/>
        <dbReference type="ChEBI" id="CHEBI:15378"/>
        <dbReference type="ChEBI" id="CHEBI:35179"/>
        <dbReference type="ChEBI" id="CHEBI:57540"/>
        <dbReference type="ChEBI" id="CHEBI:57945"/>
        <dbReference type="ChEBI" id="CHEBI:58314"/>
        <dbReference type="EC" id="1.1.1.345"/>
    </reaction>
    <physiologicalReaction direction="right-to-left" evidence="4">
        <dbReference type="Rhea" id="RHEA:35645"/>
    </physiologicalReaction>
</comment>
<comment type="catalytic activity">
    <reaction evidence="4 5">
        <text>(R)-lactate + NADP(+) = pyruvate + NADPH + H(+)</text>
        <dbReference type="Rhea" id="RHEA:62968"/>
        <dbReference type="ChEBI" id="CHEBI:15361"/>
        <dbReference type="ChEBI" id="CHEBI:15378"/>
        <dbReference type="ChEBI" id="CHEBI:16004"/>
        <dbReference type="ChEBI" id="CHEBI:57783"/>
        <dbReference type="ChEBI" id="CHEBI:58349"/>
    </reaction>
    <physiologicalReaction direction="right-to-left" evidence="4">
        <dbReference type="Rhea" id="RHEA:62970"/>
    </physiologicalReaction>
</comment>
<comment type="catalytic activity">
    <reaction evidence="4 5">
        <text>(R)-lactate + NAD(+) = pyruvate + NADH + H(+)</text>
        <dbReference type="Rhea" id="RHEA:16369"/>
        <dbReference type="ChEBI" id="CHEBI:15361"/>
        <dbReference type="ChEBI" id="CHEBI:15378"/>
        <dbReference type="ChEBI" id="CHEBI:16004"/>
        <dbReference type="ChEBI" id="CHEBI:57540"/>
        <dbReference type="ChEBI" id="CHEBI:57945"/>
        <dbReference type="EC" id="1.1.1.28"/>
    </reaction>
    <physiologicalReaction direction="right-to-left" evidence="4">
        <dbReference type="Rhea" id="RHEA:16371"/>
    </physiologicalReaction>
</comment>
<comment type="catalytic activity">
    <reaction evidence="4">
        <text>(2R)-hydroxybutanoate + NADP(+) = 2-oxobutanoate + NADPH + H(+)</text>
        <dbReference type="Rhea" id="RHEA:83043"/>
        <dbReference type="ChEBI" id="CHEBI:15378"/>
        <dbReference type="ChEBI" id="CHEBI:16763"/>
        <dbReference type="ChEBI" id="CHEBI:57783"/>
        <dbReference type="ChEBI" id="CHEBI:58349"/>
        <dbReference type="ChEBI" id="CHEBI:232384"/>
    </reaction>
    <physiologicalReaction direction="right-to-left" evidence="4">
        <dbReference type="Rhea" id="RHEA:83045"/>
    </physiologicalReaction>
</comment>
<comment type="biophysicochemical properties">
    <kinetics>
        <KM evidence="4">1.45 mM for pyruvate (in the presence of NADPH at pH 5.6)</KM>
        <KM evidence="5">1.49 mM for pyruvate (in the presence of NADPH at pH 5.6)</KM>
        <KM evidence="4">2.6 mM for alpha-ketobutyrate (in the presence of NADPH at pH 5.6)</KM>
        <KM evidence="4">40 mM for alpha-ketovalerate (in the presence of NADPH at pH 5.6)</KM>
        <KM evidence="4">20 mM for alpha-ketocaproate (in the presence of NADPH at pH 5.6)</KM>
        <KM evidence="4">31 mM for alpha-ketoisocaproate (in the presence of NADPH at pH 5.6)</KM>
        <KM evidence="4">2 uM for NADPH (at pH 5.6)</KM>
        <KM evidence="4">21 uM for NADH (at pH 5.6)</KM>
        <text evidence="4 5">kcat is 40 sec(-1) with pyruvate as substrate (in the presence of NADPH at pH 5.6) (PubMed:1931965). kcat is 10.7 sec(-1) with pyruvate as substrate (in the presence of NADPH at pH 5.6) (PubMed:9605319). kcat is 35 sec(-1) with alpha-ketobutyrate as substrate (in the presence of NADPH at pH 5.6) (PubMed:1931965). kcat is 35 sec(-1) with alpha-ketovalerate as substrate (in the presence of NADPH at pH 5.6) (PubMed:1931965). kcat is 2.4 sec(-1) with alpha-ketocaproate as substrate (in the presence of NADPH at pH 5.6) (PubMed:1931965). kcat is 5.2 sec(-1) with alpha-ketoisocaproate as substrate (in the presence of NADPH at pH 5.6) (PubMed:1931965).</text>
    </kinetics>
    <phDependence>
        <text evidence="4">Optimum pH is 5.6.</text>
    </phDependence>
</comment>
<comment type="induction">
    <text>By vancomycin, mediated by VanS/VanR.</text>
</comment>
<comment type="similarity">
    <text evidence="7">Belongs to the D-isomer specific 2-hydroxyacid dehydrogenase family.</text>
</comment>
<accession>Q05709</accession>
<geneLocation type="plasmid">
    <name>pIP816</name>
</geneLocation>
<sequence>MNNIGITVYGCEQDEADAFHALSPRFGVMATIINANVSESNAKSAPFNQCISVGHKSEISASILLALKRAGVKYISTRSIGCNHIDTTAAKRMGITVDNVAYSPDSVADYTMMLILMAVRNVKSIVRSVEKHDFRLDSDRGKVLSDMTVGVVGTGQIGKAVIERLRGFGCKVLAYSRSRSIEVNYVPFDELLQNSDIVTLHVPLNTDTHYIISHEQIQRMKQGAFLINTGRGPLVDTYELVKALENGKLGGAALDVLEGEEEFFYSDCTQKPIDNQFLLKLQRMPNVIITPHTAYYTEQALRDTVEKTIKNCLDFERRQEHE</sequence>
<gene>
    <name evidence="6" type="primary">vanH</name>
</gene>
<feature type="chain" id="PRO_0000076023" description="D-specific alpha-keto acid dehydrogenase">
    <location>
        <begin position="1"/>
        <end position="322"/>
    </location>
</feature>
<feature type="active site" evidence="1">
    <location>
        <position position="231"/>
    </location>
</feature>
<feature type="active site" evidence="1">
    <location>
        <position position="260"/>
    </location>
</feature>
<feature type="active site" description="Proton donor" evidence="1">
    <location>
        <position position="292"/>
    </location>
</feature>
<feature type="binding site" evidence="1">
    <location>
        <begin position="156"/>
        <end position="157"/>
    </location>
    <ligand>
        <name>NAD(+)</name>
        <dbReference type="ChEBI" id="CHEBI:57540"/>
    </ligand>
</feature>
<feature type="binding site" evidence="1">
    <location>
        <begin position="229"/>
        <end position="231"/>
    </location>
    <ligand>
        <name>NAD(+)</name>
        <dbReference type="ChEBI" id="CHEBI:57540"/>
    </ligand>
</feature>
<feature type="binding site" evidence="1">
    <location>
        <position position="255"/>
    </location>
    <ligand>
        <name>NAD(+)</name>
        <dbReference type="ChEBI" id="CHEBI:57540"/>
    </ligand>
</feature>
<feature type="binding site" evidence="1">
    <location>
        <begin position="292"/>
        <end position="295"/>
    </location>
    <ligand>
        <name>NAD(+)</name>
        <dbReference type="ChEBI" id="CHEBI:57540"/>
    </ligand>
</feature>